<evidence type="ECO:0000255" key="1">
    <source>
        <dbReference type="HAMAP-Rule" id="MF_00185"/>
    </source>
</evidence>
<gene>
    <name evidence="1" type="primary">miaA</name>
    <name type="ordered locus">Mvan_2434</name>
</gene>
<keyword id="KW-0067">ATP-binding</keyword>
<keyword id="KW-0460">Magnesium</keyword>
<keyword id="KW-0547">Nucleotide-binding</keyword>
<keyword id="KW-0808">Transferase</keyword>
<keyword id="KW-0819">tRNA processing</keyword>
<sequence length="308" mass="33007">MRPLAIVGPTGTGKSDLALAVAGLLSAEIAVEVVNADAMQLYRGMDIGTAKLTVVERHGVPHHQLDVLDVTETATVARYQQAAAADVEAIAARGALPVIVGGSMLYVQSLLDQWSFPATDPRVRTRWERRLAEIGVAALHHELADVDAAAAASILPTDGRRIVRALEVVELTGQPFAASAPTIGAPRWGTVIVGLDWDTTVLDERLARRTDLMFERGLVDEVVGLLGVGLREGVTAARALGYAQVLADLDAGGDGSAAREPTFVGTRRYVRRQRSWFRRDHRITWLDGAAGGSAALADKVIRIWRDVS</sequence>
<name>MIAA_MYCVP</name>
<reference key="1">
    <citation type="submission" date="2006-12" db="EMBL/GenBank/DDBJ databases">
        <title>Complete sequence of Mycobacterium vanbaalenii PYR-1.</title>
        <authorList>
            <consortium name="US DOE Joint Genome Institute"/>
            <person name="Copeland A."/>
            <person name="Lucas S."/>
            <person name="Lapidus A."/>
            <person name="Barry K."/>
            <person name="Detter J.C."/>
            <person name="Glavina del Rio T."/>
            <person name="Hammon N."/>
            <person name="Israni S."/>
            <person name="Dalin E."/>
            <person name="Tice H."/>
            <person name="Pitluck S."/>
            <person name="Singan V."/>
            <person name="Schmutz J."/>
            <person name="Larimer F."/>
            <person name="Land M."/>
            <person name="Hauser L."/>
            <person name="Kyrpides N."/>
            <person name="Anderson I.J."/>
            <person name="Miller C."/>
            <person name="Richardson P."/>
        </authorList>
    </citation>
    <scope>NUCLEOTIDE SEQUENCE [LARGE SCALE GENOMIC DNA]</scope>
    <source>
        <strain>DSM 7251 / JCM 13017 / BCRC 16820 / KCTC 9966 / NRRL B-24157 / PYR-1</strain>
    </source>
</reference>
<accession>A1T7U7</accession>
<proteinExistence type="inferred from homology"/>
<feature type="chain" id="PRO_0000377234" description="tRNA dimethylallyltransferase">
    <location>
        <begin position="1"/>
        <end position="308"/>
    </location>
</feature>
<feature type="binding site" evidence="1">
    <location>
        <begin position="8"/>
        <end position="15"/>
    </location>
    <ligand>
        <name>ATP</name>
        <dbReference type="ChEBI" id="CHEBI:30616"/>
    </ligand>
</feature>
<feature type="binding site" evidence="1">
    <location>
        <begin position="10"/>
        <end position="15"/>
    </location>
    <ligand>
        <name>substrate</name>
    </ligand>
</feature>
<feature type="site" description="Interaction with substrate tRNA" evidence="1">
    <location>
        <position position="103"/>
    </location>
</feature>
<feature type="site" description="Interaction with substrate tRNA" evidence="1">
    <location>
        <position position="124"/>
    </location>
</feature>
<organism>
    <name type="scientific">Mycolicibacterium vanbaalenii (strain DSM 7251 / JCM 13017 / BCRC 16820 / KCTC 9966 / NRRL B-24157 / PYR-1)</name>
    <name type="common">Mycobacterium vanbaalenii</name>
    <dbReference type="NCBI Taxonomy" id="350058"/>
    <lineage>
        <taxon>Bacteria</taxon>
        <taxon>Bacillati</taxon>
        <taxon>Actinomycetota</taxon>
        <taxon>Actinomycetes</taxon>
        <taxon>Mycobacteriales</taxon>
        <taxon>Mycobacteriaceae</taxon>
        <taxon>Mycolicibacterium</taxon>
    </lineage>
</organism>
<protein>
    <recommendedName>
        <fullName evidence="1">tRNA dimethylallyltransferase</fullName>
        <ecNumber evidence="1">2.5.1.75</ecNumber>
    </recommendedName>
    <alternativeName>
        <fullName evidence="1">Dimethylallyl diphosphate:tRNA dimethylallyltransferase</fullName>
        <shortName evidence="1">DMAPP:tRNA dimethylallyltransferase</shortName>
        <shortName evidence="1">DMATase</shortName>
    </alternativeName>
    <alternativeName>
        <fullName evidence="1">Isopentenyl-diphosphate:tRNA isopentenyltransferase</fullName>
        <shortName evidence="1">IPP transferase</shortName>
        <shortName evidence="1">IPPT</shortName>
        <shortName evidence="1">IPTase</shortName>
    </alternativeName>
</protein>
<comment type="function">
    <text evidence="1">Catalyzes the transfer of a dimethylallyl group onto the adenine at position 37 in tRNAs that read codons beginning with uridine, leading to the formation of N6-(dimethylallyl)adenosine (i(6)A).</text>
</comment>
<comment type="catalytic activity">
    <reaction evidence="1">
        <text>adenosine(37) in tRNA + dimethylallyl diphosphate = N(6)-dimethylallyladenosine(37) in tRNA + diphosphate</text>
        <dbReference type="Rhea" id="RHEA:26482"/>
        <dbReference type="Rhea" id="RHEA-COMP:10162"/>
        <dbReference type="Rhea" id="RHEA-COMP:10375"/>
        <dbReference type="ChEBI" id="CHEBI:33019"/>
        <dbReference type="ChEBI" id="CHEBI:57623"/>
        <dbReference type="ChEBI" id="CHEBI:74411"/>
        <dbReference type="ChEBI" id="CHEBI:74415"/>
        <dbReference type="EC" id="2.5.1.75"/>
    </reaction>
</comment>
<comment type="cofactor">
    <cofactor evidence="1">
        <name>Mg(2+)</name>
        <dbReference type="ChEBI" id="CHEBI:18420"/>
    </cofactor>
</comment>
<comment type="subunit">
    <text evidence="1">Monomer.</text>
</comment>
<comment type="similarity">
    <text evidence="1">Belongs to the IPP transferase family.</text>
</comment>
<dbReference type="EC" id="2.5.1.75" evidence="1"/>
<dbReference type="EMBL" id="CP000511">
    <property type="protein sequence ID" value="ABM13247.1"/>
    <property type="molecule type" value="Genomic_DNA"/>
</dbReference>
<dbReference type="RefSeq" id="WP_011779659.1">
    <property type="nucleotide sequence ID" value="NZ_JACKSD010000041.1"/>
</dbReference>
<dbReference type="SMR" id="A1T7U7"/>
<dbReference type="STRING" id="350058.Mvan_2434"/>
<dbReference type="KEGG" id="mva:Mvan_2434"/>
<dbReference type="eggNOG" id="COG0324">
    <property type="taxonomic scope" value="Bacteria"/>
</dbReference>
<dbReference type="HOGENOM" id="CLU_032616_0_1_11"/>
<dbReference type="Proteomes" id="UP000009159">
    <property type="component" value="Chromosome"/>
</dbReference>
<dbReference type="GO" id="GO:0005524">
    <property type="term" value="F:ATP binding"/>
    <property type="evidence" value="ECO:0007669"/>
    <property type="project" value="UniProtKB-UniRule"/>
</dbReference>
<dbReference type="GO" id="GO:0052381">
    <property type="term" value="F:tRNA dimethylallyltransferase activity"/>
    <property type="evidence" value="ECO:0007669"/>
    <property type="project" value="UniProtKB-UniRule"/>
</dbReference>
<dbReference type="GO" id="GO:0006400">
    <property type="term" value="P:tRNA modification"/>
    <property type="evidence" value="ECO:0007669"/>
    <property type="project" value="TreeGrafter"/>
</dbReference>
<dbReference type="FunFam" id="1.10.20.140:FF:000001">
    <property type="entry name" value="tRNA dimethylallyltransferase"/>
    <property type="match status" value="1"/>
</dbReference>
<dbReference type="Gene3D" id="1.10.20.140">
    <property type="match status" value="1"/>
</dbReference>
<dbReference type="Gene3D" id="3.40.50.300">
    <property type="entry name" value="P-loop containing nucleotide triphosphate hydrolases"/>
    <property type="match status" value="1"/>
</dbReference>
<dbReference type="HAMAP" id="MF_00185">
    <property type="entry name" value="IPP_trans"/>
    <property type="match status" value="1"/>
</dbReference>
<dbReference type="InterPro" id="IPR039657">
    <property type="entry name" value="Dimethylallyltransferase"/>
</dbReference>
<dbReference type="InterPro" id="IPR018022">
    <property type="entry name" value="IPT"/>
</dbReference>
<dbReference type="InterPro" id="IPR027417">
    <property type="entry name" value="P-loop_NTPase"/>
</dbReference>
<dbReference type="NCBIfam" id="TIGR00174">
    <property type="entry name" value="miaA"/>
    <property type="match status" value="1"/>
</dbReference>
<dbReference type="PANTHER" id="PTHR11088">
    <property type="entry name" value="TRNA DIMETHYLALLYLTRANSFERASE"/>
    <property type="match status" value="1"/>
</dbReference>
<dbReference type="PANTHER" id="PTHR11088:SF60">
    <property type="entry name" value="TRNA DIMETHYLALLYLTRANSFERASE"/>
    <property type="match status" value="1"/>
</dbReference>
<dbReference type="Pfam" id="PF01715">
    <property type="entry name" value="IPPT"/>
    <property type="match status" value="1"/>
</dbReference>
<dbReference type="SUPFAM" id="SSF52540">
    <property type="entry name" value="P-loop containing nucleoside triphosphate hydrolases"/>
    <property type="match status" value="2"/>
</dbReference>